<sequence>MRLYRDRAVVLRQHKLGEADRIVTLLTRDHGLVRAVAKGVRRTRSKFGSRLEPFAHIDAQLHPGRNLDIVTQVVSIDAFAADIVNDYGRYTCGCAMLETAERLAGEERAPAPALHRLTVGALRAVADGSRPRDLLLDAYLLRAMGIAGWVPALTECARCATPGPHRAFHIAAGGSVCPHCRPAGSTTPPLGVLDLMSALHDGDWEAAQGAPQSHRSYVSGLVAAHLQWHLERQLKTLPLVERFYQADRSVAERRAALIGQDSECG</sequence>
<organism>
    <name type="scientific">Mycobacterium ulcerans (strain Agy99)</name>
    <dbReference type="NCBI Taxonomy" id="362242"/>
    <lineage>
        <taxon>Bacteria</taxon>
        <taxon>Bacillati</taxon>
        <taxon>Actinomycetota</taxon>
        <taxon>Actinomycetes</taxon>
        <taxon>Mycobacteriales</taxon>
        <taxon>Mycobacteriaceae</taxon>
        <taxon>Mycobacterium</taxon>
        <taxon>Mycobacterium ulcerans group</taxon>
    </lineage>
</organism>
<reference key="1">
    <citation type="journal article" date="2007" name="Genome Res.">
        <title>Reductive evolution and niche adaptation inferred from the genome of Mycobacterium ulcerans, the causative agent of Buruli ulcer.</title>
        <authorList>
            <person name="Stinear T.P."/>
            <person name="Seemann T."/>
            <person name="Pidot S."/>
            <person name="Frigui W."/>
            <person name="Reysset G."/>
            <person name="Garnier T."/>
            <person name="Meurice G."/>
            <person name="Simon D."/>
            <person name="Bouchier C."/>
            <person name="Ma L."/>
            <person name="Tichit M."/>
            <person name="Porter J.L."/>
            <person name="Ryan J."/>
            <person name="Johnson P.D.R."/>
            <person name="Davies J.K."/>
            <person name="Jenkin G.A."/>
            <person name="Small P.L.C."/>
            <person name="Jones L.M."/>
            <person name="Tekaia F."/>
            <person name="Laval F."/>
            <person name="Daffe M."/>
            <person name="Parkhill J."/>
            <person name="Cole S.T."/>
        </authorList>
    </citation>
    <scope>NUCLEOTIDE SEQUENCE [LARGE SCALE GENOMIC DNA]</scope>
    <source>
        <strain>Agy99</strain>
    </source>
</reference>
<keyword id="KW-0227">DNA damage</keyword>
<keyword id="KW-0233">DNA recombination</keyword>
<keyword id="KW-0234">DNA repair</keyword>
<protein>
    <recommendedName>
        <fullName evidence="1">DNA repair protein RecO</fullName>
    </recommendedName>
    <alternativeName>
        <fullName evidence="1">Recombination protein O</fullName>
    </alternativeName>
</protein>
<proteinExistence type="inferred from homology"/>
<comment type="function">
    <text evidence="1">Involved in DNA repair and RecF pathway recombination.</text>
</comment>
<comment type="similarity">
    <text evidence="1">Belongs to the RecO family.</text>
</comment>
<dbReference type="EMBL" id="CP000325">
    <property type="protein sequence ID" value="ABL05751.1"/>
    <property type="molecule type" value="Genomic_DNA"/>
</dbReference>
<dbReference type="RefSeq" id="WP_011741356.1">
    <property type="nucleotide sequence ID" value="NC_008611.1"/>
</dbReference>
<dbReference type="SMR" id="A0PTT2"/>
<dbReference type="GeneID" id="93438017"/>
<dbReference type="KEGG" id="mul:MUL_3615"/>
<dbReference type="eggNOG" id="COG1381">
    <property type="taxonomic scope" value="Bacteria"/>
</dbReference>
<dbReference type="HOGENOM" id="CLU_066632_1_1_11"/>
<dbReference type="Proteomes" id="UP000000765">
    <property type="component" value="Chromosome"/>
</dbReference>
<dbReference type="GO" id="GO:0043590">
    <property type="term" value="C:bacterial nucleoid"/>
    <property type="evidence" value="ECO:0007669"/>
    <property type="project" value="TreeGrafter"/>
</dbReference>
<dbReference type="GO" id="GO:0006310">
    <property type="term" value="P:DNA recombination"/>
    <property type="evidence" value="ECO:0007669"/>
    <property type="project" value="UniProtKB-UniRule"/>
</dbReference>
<dbReference type="GO" id="GO:0006302">
    <property type="term" value="P:double-strand break repair"/>
    <property type="evidence" value="ECO:0007669"/>
    <property type="project" value="TreeGrafter"/>
</dbReference>
<dbReference type="FunFam" id="1.20.1440.120:FF:000002">
    <property type="entry name" value="DNA repair protein RecO"/>
    <property type="match status" value="1"/>
</dbReference>
<dbReference type="FunFam" id="2.40.50.140:FF:000176">
    <property type="entry name" value="DNA repair protein RecO"/>
    <property type="match status" value="1"/>
</dbReference>
<dbReference type="Gene3D" id="2.40.50.140">
    <property type="entry name" value="Nucleic acid-binding proteins"/>
    <property type="match status" value="1"/>
</dbReference>
<dbReference type="Gene3D" id="1.20.1440.120">
    <property type="entry name" value="Recombination protein O, C-terminal domain"/>
    <property type="match status" value="1"/>
</dbReference>
<dbReference type="HAMAP" id="MF_00201">
    <property type="entry name" value="RecO"/>
    <property type="match status" value="1"/>
</dbReference>
<dbReference type="InterPro" id="IPR037278">
    <property type="entry name" value="ARFGAP/RecO"/>
</dbReference>
<dbReference type="InterPro" id="IPR022572">
    <property type="entry name" value="DNA_rep/recomb_RecO_N"/>
</dbReference>
<dbReference type="InterPro" id="IPR012340">
    <property type="entry name" value="NA-bd_OB-fold"/>
</dbReference>
<dbReference type="InterPro" id="IPR003717">
    <property type="entry name" value="RecO"/>
</dbReference>
<dbReference type="InterPro" id="IPR042242">
    <property type="entry name" value="RecO_C"/>
</dbReference>
<dbReference type="NCBIfam" id="TIGR00613">
    <property type="entry name" value="reco"/>
    <property type="match status" value="1"/>
</dbReference>
<dbReference type="PANTHER" id="PTHR33991">
    <property type="entry name" value="DNA REPAIR PROTEIN RECO"/>
    <property type="match status" value="1"/>
</dbReference>
<dbReference type="PANTHER" id="PTHR33991:SF1">
    <property type="entry name" value="DNA REPAIR PROTEIN RECO"/>
    <property type="match status" value="1"/>
</dbReference>
<dbReference type="Pfam" id="PF02565">
    <property type="entry name" value="RecO_C"/>
    <property type="match status" value="1"/>
</dbReference>
<dbReference type="Pfam" id="PF11967">
    <property type="entry name" value="RecO_N"/>
    <property type="match status" value="1"/>
</dbReference>
<dbReference type="SUPFAM" id="SSF57863">
    <property type="entry name" value="ArfGap/RecO-like zinc finger"/>
    <property type="match status" value="1"/>
</dbReference>
<dbReference type="SUPFAM" id="SSF50249">
    <property type="entry name" value="Nucleic acid-binding proteins"/>
    <property type="match status" value="1"/>
</dbReference>
<feature type="chain" id="PRO_1000012144" description="DNA repair protein RecO">
    <location>
        <begin position="1"/>
        <end position="265"/>
    </location>
</feature>
<evidence type="ECO:0000255" key="1">
    <source>
        <dbReference type="HAMAP-Rule" id="MF_00201"/>
    </source>
</evidence>
<name>RECO_MYCUA</name>
<accession>A0PTT2</accession>
<gene>
    <name evidence="1" type="primary">recO</name>
    <name type="ordered locus">MUL_3615</name>
</gene>